<sequence length="209" mass="22244">MIGLVGKKVGMTRIFTEDGVSIPVTVIEVEANRVTQVKDLANDGYRAIQVTTGAKKANRVTKPEAGHFAKAGVEAGRGLWEFRLAEGEEFTVGQSISVELFADVKKVDVTGTSKGKGFAGTVKRWNFRTQDATHGNSLSHRVPGSIGQNQTPGKVFKGKKMAGQMGNERVTVQSLDVVRVDAERNLLLVKGAVPGATGSDLIVKPAVKA</sequence>
<protein>
    <recommendedName>
        <fullName evidence="1">Large ribosomal subunit protein uL3</fullName>
    </recommendedName>
    <alternativeName>
        <fullName evidence="2">50S ribosomal protein L3</fullName>
    </alternativeName>
</protein>
<name>RL3_ECO8A</name>
<comment type="function">
    <text evidence="1">One of the primary rRNA binding proteins, it binds directly near the 3'-end of the 23S rRNA, where it nucleates assembly of the 50S subunit.</text>
</comment>
<comment type="subunit">
    <text evidence="1">Part of the 50S ribosomal subunit. Forms a cluster with proteins L14 and L19.</text>
</comment>
<comment type="PTM">
    <text evidence="1">Methylated by PrmB.</text>
</comment>
<comment type="similarity">
    <text evidence="1">Belongs to the universal ribosomal protein uL3 family.</text>
</comment>
<feature type="chain" id="PRO_1000141862" description="Large ribosomal subunit protein uL3">
    <location>
        <begin position="1"/>
        <end position="209"/>
    </location>
</feature>
<feature type="modified residue" description="N5-methylglutamine" evidence="1">
    <location>
        <position position="150"/>
    </location>
</feature>
<organism>
    <name type="scientific">Escherichia coli O8 (strain IAI1)</name>
    <dbReference type="NCBI Taxonomy" id="585034"/>
    <lineage>
        <taxon>Bacteria</taxon>
        <taxon>Pseudomonadati</taxon>
        <taxon>Pseudomonadota</taxon>
        <taxon>Gammaproteobacteria</taxon>
        <taxon>Enterobacterales</taxon>
        <taxon>Enterobacteriaceae</taxon>
        <taxon>Escherichia</taxon>
    </lineage>
</organism>
<dbReference type="EMBL" id="CU928160">
    <property type="protein sequence ID" value="CAR00271.1"/>
    <property type="molecule type" value="Genomic_DNA"/>
</dbReference>
<dbReference type="RefSeq" id="WP_000579833.1">
    <property type="nucleotide sequence ID" value="NC_011741.1"/>
</dbReference>
<dbReference type="SMR" id="B7M1N4"/>
<dbReference type="GeneID" id="86948184"/>
<dbReference type="KEGG" id="ecr:ECIAI1_3469"/>
<dbReference type="HOGENOM" id="CLU_044142_4_1_6"/>
<dbReference type="GO" id="GO:0022625">
    <property type="term" value="C:cytosolic large ribosomal subunit"/>
    <property type="evidence" value="ECO:0007669"/>
    <property type="project" value="TreeGrafter"/>
</dbReference>
<dbReference type="GO" id="GO:0019843">
    <property type="term" value="F:rRNA binding"/>
    <property type="evidence" value="ECO:0007669"/>
    <property type="project" value="UniProtKB-UniRule"/>
</dbReference>
<dbReference type="GO" id="GO:0003735">
    <property type="term" value="F:structural constituent of ribosome"/>
    <property type="evidence" value="ECO:0007669"/>
    <property type="project" value="InterPro"/>
</dbReference>
<dbReference type="GO" id="GO:0006412">
    <property type="term" value="P:translation"/>
    <property type="evidence" value="ECO:0007669"/>
    <property type="project" value="UniProtKB-UniRule"/>
</dbReference>
<dbReference type="FunFam" id="2.40.30.10:FF:000004">
    <property type="entry name" value="50S ribosomal protein L3"/>
    <property type="match status" value="1"/>
</dbReference>
<dbReference type="FunFam" id="3.30.160.810:FF:000001">
    <property type="entry name" value="50S ribosomal protein L3"/>
    <property type="match status" value="1"/>
</dbReference>
<dbReference type="Gene3D" id="3.30.160.810">
    <property type="match status" value="1"/>
</dbReference>
<dbReference type="Gene3D" id="2.40.30.10">
    <property type="entry name" value="Translation factors"/>
    <property type="match status" value="1"/>
</dbReference>
<dbReference type="HAMAP" id="MF_01325_B">
    <property type="entry name" value="Ribosomal_uL3_B"/>
    <property type="match status" value="1"/>
</dbReference>
<dbReference type="InterPro" id="IPR000597">
    <property type="entry name" value="Ribosomal_uL3"/>
</dbReference>
<dbReference type="InterPro" id="IPR019927">
    <property type="entry name" value="Ribosomal_uL3_bac/org-type"/>
</dbReference>
<dbReference type="InterPro" id="IPR019926">
    <property type="entry name" value="Ribosomal_uL3_CS"/>
</dbReference>
<dbReference type="InterPro" id="IPR009000">
    <property type="entry name" value="Transl_B-barrel_sf"/>
</dbReference>
<dbReference type="NCBIfam" id="TIGR03625">
    <property type="entry name" value="L3_bact"/>
    <property type="match status" value="1"/>
</dbReference>
<dbReference type="PANTHER" id="PTHR11229">
    <property type="entry name" value="50S RIBOSOMAL PROTEIN L3"/>
    <property type="match status" value="1"/>
</dbReference>
<dbReference type="PANTHER" id="PTHR11229:SF16">
    <property type="entry name" value="LARGE RIBOSOMAL SUBUNIT PROTEIN UL3C"/>
    <property type="match status" value="1"/>
</dbReference>
<dbReference type="Pfam" id="PF00297">
    <property type="entry name" value="Ribosomal_L3"/>
    <property type="match status" value="1"/>
</dbReference>
<dbReference type="SUPFAM" id="SSF50447">
    <property type="entry name" value="Translation proteins"/>
    <property type="match status" value="1"/>
</dbReference>
<dbReference type="PROSITE" id="PS00474">
    <property type="entry name" value="RIBOSOMAL_L3"/>
    <property type="match status" value="1"/>
</dbReference>
<evidence type="ECO:0000255" key="1">
    <source>
        <dbReference type="HAMAP-Rule" id="MF_01325"/>
    </source>
</evidence>
<evidence type="ECO:0000305" key="2"/>
<accession>B7M1N4</accession>
<reference key="1">
    <citation type="journal article" date="2009" name="PLoS Genet.">
        <title>Organised genome dynamics in the Escherichia coli species results in highly diverse adaptive paths.</title>
        <authorList>
            <person name="Touchon M."/>
            <person name="Hoede C."/>
            <person name="Tenaillon O."/>
            <person name="Barbe V."/>
            <person name="Baeriswyl S."/>
            <person name="Bidet P."/>
            <person name="Bingen E."/>
            <person name="Bonacorsi S."/>
            <person name="Bouchier C."/>
            <person name="Bouvet O."/>
            <person name="Calteau A."/>
            <person name="Chiapello H."/>
            <person name="Clermont O."/>
            <person name="Cruveiller S."/>
            <person name="Danchin A."/>
            <person name="Diard M."/>
            <person name="Dossat C."/>
            <person name="Karoui M.E."/>
            <person name="Frapy E."/>
            <person name="Garry L."/>
            <person name="Ghigo J.M."/>
            <person name="Gilles A.M."/>
            <person name="Johnson J."/>
            <person name="Le Bouguenec C."/>
            <person name="Lescat M."/>
            <person name="Mangenot S."/>
            <person name="Martinez-Jehanne V."/>
            <person name="Matic I."/>
            <person name="Nassif X."/>
            <person name="Oztas S."/>
            <person name="Petit M.A."/>
            <person name="Pichon C."/>
            <person name="Rouy Z."/>
            <person name="Ruf C.S."/>
            <person name="Schneider D."/>
            <person name="Tourret J."/>
            <person name="Vacherie B."/>
            <person name="Vallenet D."/>
            <person name="Medigue C."/>
            <person name="Rocha E.P.C."/>
            <person name="Denamur E."/>
        </authorList>
    </citation>
    <scope>NUCLEOTIDE SEQUENCE [LARGE SCALE GENOMIC DNA]</scope>
    <source>
        <strain>IAI1</strain>
    </source>
</reference>
<proteinExistence type="inferred from homology"/>
<keyword id="KW-0488">Methylation</keyword>
<keyword id="KW-0687">Ribonucleoprotein</keyword>
<keyword id="KW-0689">Ribosomal protein</keyword>
<keyword id="KW-0694">RNA-binding</keyword>
<keyword id="KW-0699">rRNA-binding</keyword>
<gene>
    <name evidence="1" type="primary">rplC</name>
    <name type="ordered locus">ECIAI1_3469</name>
</gene>